<evidence type="ECO:0000250" key="1"/>
<evidence type="ECO:0000305" key="2"/>
<feature type="chain" id="PRO_0000191660" description="Rab3 GTPase-activating protein catalytic subunit">
    <location>
        <begin position="1"/>
        <end position="915"/>
    </location>
</feature>
<protein>
    <recommendedName>
        <fullName>Rab3 GTPase-activating protein catalytic subunit</fullName>
    </recommendedName>
    <alternativeName>
        <fullName>Rab3 GTPase-activating protein 1</fullName>
    </alternativeName>
</protein>
<proteinExistence type="inferred from homology"/>
<accession>Q93538</accession>
<sequence>MAEIEENTVFEINDFTIVTDMEHFGAAFEGILQKYEFSSRRPCLSNDVKYRLIVTDTNMISIGENKLRIELLQPVPASSNPSNDVEFVEAPKDEIEEDAHVIPFTVAEEVANLKHGFEVTDSFLLKFGIRECIIISPNDSSGTFTDENQVNTVMGNIKTILHSSRCEVPVFCYIKDQSLDMISGYASDGNSTYNFSSVVLRNINRRHCSMTDLLYLFKEHLGASISAFHEEVRMSSRFTHVVPLKQSKYFRNHTVETFGLLATGPTSSLPFDILEIAATWRFFRENSLTENHSHSDFDINYSSYWNIKMKSTKSSLLGVLDEILGVYREDTRKAIRSDLNCALILGKHYTQKELPNAFQKLTINSASEVKIGKHAETEDSGTNGPMPPALMKSWVNFIFNEAESDNESLAHELNMLNAASMSENQLSDDELVNNVKLDTLFNYKNPKSANTFLAPYKCAKKSTVTWRLAIALANARVFMSDQPRAEPQLWVEFLLKLREKYEKMETVEKVYNGIDHLQCSFSQKMQMLQLCIDARQKRHRMLDSAHSANNSDEFFDANESFNAETILEPNNEGRLKLFGLNLVEIPDVPMYIPVTQDACPLTDEMIDARNEHLFSLDEEDRVHLQMELVKSDMQSFKAANAGAVFADFLRWHSPKDYDEKTNTISERMLISNNVWVRSWEAALPIPVANQARIFNDTKIAEEILEIFNNATLDQVREWMKPTVFAATLERLTEIESSYGVSEEKQKQRTKTAKILANATLNNTPMDYNEISKYCSQIEMIHNMKVHLMQLFENAREKMHPPYPSETDVQSAIKQLVNIAVHNLWDNSTDEEPTFVIKPQDPIGRAIAVIGKLDELTEQQLINGHRKEYIFNWKHSCPSTTTIPMTHRMYADLRSDKHSLYFSMANDCNFSNSSYL</sequence>
<reference key="1">
    <citation type="journal article" date="1998" name="Science">
        <title>Genome sequence of the nematode C. elegans: a platform for investigating biology.</title>
        <authorList>
            <consortium name="The C. elegans sequencing consortium"/>
        </authorList>
    </citation>
    <scope>NUCLEOTIDE SEQUENCE [LARGE SCALE GENOMIC DNA]</scope>
    <source>
        <strain>Bristol N2</strain>
    </source>
</reference>
<comment type="function">
    <text evidence="1">Probable catalytic subunit of a GTPase activating protein that has specificity for Rab3 subfamily. Rab3 proteins are involved in regulated exocytosis of neurotransmitters and hormones. Specifically converts active Rab3-GTP to the inactive form Rab3-GDP (By similarity).</text>
</comment>
<comment type="subunit">
    <text evidence="1">The Rab3 GTPase-activating complex is a heterodimer composed of rbg-1 and rbg-2.</text>
</comment>
<comment type="subcellular location">
    <subcellularLocation>
        <location evidence="2">Cytoplasm</location>
    </subcellularLocation>
</comment>
<comment type="similarity">
    <text evidence="2">Belongs to the Rab3-GAP catalytic subunit family.</text>
</comment>
<organism>
    <name type="scientific">Caenorhabditis elegans</name>
    <dbReference type="NCBI Taxonomy" id="6239"/>
    <lineage>
        <taxon>Eukaryota</taxon>
        <taxon>Metazoa</taxon>
        <taxon>Ecdysozoa</taxon>
        <taxon>Nematoda</taxon>
        <taxon>Chromadorea</taxon>
        <taxon>Rhabditida</taxon>
        <taxon>Rhabditina</taxon>
        <taxon>Rhabditomorpha</taxon>
        <taxon>Rhabditoidea</taxon>
        <taxon>Rhabditidae</taxon>
        <taxon>Peloderinae</taxon>
        <taxon>Caenorhabditis</taxon>
    </lineage>
</organism>
<dbReference type="EMBL" id="Z78542">
    <property type="protein sequence ID" value="CAB01748.1"/>
    <property type="molecule type" value="Genomic_DNA"/>
</dbReference>
<dbReference type="PIR" id="T21147">
    <property type="entry name" value="T21147"/>
</dbReference>
<dbReference type="RefSeq" id="NP_510490.1">
    <property type="nucleotide sequence ID" value="NM_078089.6"/>
</dbReference>
<dbReference type="BioGRID" id="46492">
    <property type="interactions" value="3"/>
</dbReference>
<dbReference type="FunCoup" id="Q93538">
    <property type="interactions" value="2634"/>
</dbReference>
<dbReference type="STRING" id="6239.F20D1.6.1"/>
<dbReference type="PaxDb" id="6239-F20D1.6"/>
<dbReference type="PeptideAtlas" id="Q93538"/>
<dbReference type="EnsemblMetazoa" id="F20D1.6.1">
    <property type="protein sequence ID" value="F20D1.6.1"/>
    <property type="gene ID" value="WBGene00004317"/>
</dbReference>
<dbReference type="GeneID" id="181595"/>
<dbReference type="KEGG" id="cel:CELE_F20D1.6"/>
<dbReference type="UCSC" id="F20D1.6.1">
    <property type="organism name" value="c. elegans"/>
</dbReference>
<dbReference type="AGR" id="WB:WBGene00004317"/>
<dbReference type="CTD" id="181595"/>
<dbReference type="WormBase" id="F20D1.6">
    <property type="protein sequence ID" value="CE09499"/>
    <property type="gene ID" value="WBGene00004317"/>
    <property type="gene designation" value="rbg-1"/>
</dbReference>
<dbReference type="eggNOG" id="KOG2390">
    <property type="taxonomic scope" value="Eukaryota"/>
</dbReference>
<dbReference type="GeneTree" id="ENSGT00390000006705"/>
<dbReference type="HOGENOM" id="CLU_012561_1_0_1"/>
<dbReference type="InParanoid" id="Q93538"/>
<dbReference type="OMA" id="DEMIDAR"/>
<dbReference type="OrthoDB" id="17346at2759"/>
<dbReference type="PhylomeDB" id="Q93538"/>
<dbReference type="Reactome" id="R-CEL-6811436">
    <property type="pathway name" value="COPI-independent Golgi-to-ER retrograde traffic"/>
</dbReference>
<dbReference type="Reactome" id="R-CEL-8876198">
    <property type="pathway name" value="RAB GEFs exchange GTP for GDP on RABs"/>
</dbReference>
<dbReference type="PRO" id="PR:Q93538"/>
<dbReference type="Proteomes" id="UP000001940">
    <property type="component" value="Chromosome X"/>
</dbReference>
<dbReference type="Bgee" id="WBGene00004317">
    <property type="expression patterns" value="Expressed in pharyngeal muscle cell (C elegans) and 4 other cell types or tissues"/>
</dbReference>
<dbReference type="GO" id="GO:0005737">
    <property type="term" value="C:cytoplasm"/>
    <property type="evidence" value="ECO:0007669"/>
    <property type="project" value="UniProtKB-SubCell"/>
</dbReference>
<dbReference type="GO" id="GO:0005096">
    <property type="term" value="F:GTPase activator activity"/>
    <property type="evidence" value="ECO:0000250"/>
    <property type="project" value="UniProtKB"/>
</dbReference>
<dbReference type="GO" id="GO:0031267">
    <property type="term" value="F:small GTPase binding"/>
    <property type="evidence" value="ECO:0000250"/>
    <property type="project" value="UniProtKB"/>
</dbReference>
<dbReference type="GO" id="GO:1990000">
    <property type="term" value="P:amyloid fibril formation"/>
    <property type="evidence" value="ECO:0000315"/>
    <property type="project" value="GO_Central"/>
</dbReference>
<dbReference type="GO" id="GO:0006914">
    <property type="term" value="P:autophagy"/>
    <property type="evidence" value="ECO:0000315"/>
    <property type="project" value="WormBase"/>
</dbReference>
<dbReference type="GO" id="GO:2000786">
    <property type="term" value="P:positive regulation of autophagosome assembly"/>
    <property type="evidence" value="ECO:0000315"/>
    <property type="project" value="GO_Central"/>
</dbReference>
<dbReference type="GO" id="GO:0043087">
    <property type="term" value="P:regulation of GTPase activity"/>
    <property type="evidence" value="ECO:0000250"/>
    <property type="project" value="UniProtKB"/>
</dbReference>
<dbReference type="InterPro" id="IPR045700">
    <property type="entry name" value="Rab3GAP1"/>
</dbReference>
<dbReference type="InterPro" id="IPR026147">
    <property type="entry name" value="Rab3GAP1_conserved"/>
</dbReference>
<dbReference type="PANTHER" id="PTHR21422">
    <property type="entry name" value="RAB3 GTPASE-ACTIVATING PROTEIN CATALYTIC SUBUNIT"/>
    <property type="match status" value="1"/>
</dbReference>
<dbReference type="PANTHER" id="PTHR21422:SF9">
    <property type="entry name" value="RAB3 GTPASE-ACTIVATING PROTEIN CATALYTIC SUBUNIT"/>
    <property type="match status" value="1"/>
</dbReference>
<dbReference type="Pfam" id="PF13890">
    <property type="entry name" value="Rab3-GTPase_cat"/>
    <property type="match status" value="1"/>
</dbReference>
<name>RB3GP_CAEEL</name>
<keyword id="KW-0963">Cytoplasm</keyword>
<keyword id="KW-0343">GTPase activation</keyword>
<keyword id="KW-1185">Reference proteome</keyword>
<gene>
    <name type="primary">rbg-1</name>
    <name type="ORF">F20D1.6</name>
</gene>